<protein>
    <recommendedName>
        <fullName evidence="1">Cytidylate kinase</fullName>
        <shortName evidence="1">CK</shortName>
        <ecNumber evidence="1">2.7.4.25</ecNumber>
    </recommendedName>
    <alternativeName>
        <fullName evidence="1">Cytidine monophosphate kinase</fullName>
        <shortName evidence="1">CMP kinase</shortName>
    </alternativeName>
</protein>
<comment type="catalytic activity">
    <reaction evidence="1">
        <text>CMP + ATP = CDP + ADP</text>
        <dbReference type="Rhea" id="RHEA:11600"/>
        <dbReference type="ChEBI" id="CHEBI:30616"/>
        <dbReference type="ChEBI" id="CHEBI:58069"/>
        <dbReference type="ChEBI" id="CHEBI:60377"/>
        <dbReference type="ChEBI" id="CHEBI:456216"/>
        <dbReference type="EC" id="2.7.4.25"/>
    </reaction>
</comment>
<comment type="catalytic activity">
    <reaction evidence="1">
        <text>dCMP + ATP = dCDP + ADP</text>
        <dbReference type="Rhea" id="RHEA:25094"/>
        <dbReference type="ChEBI" id="CHEBI:30616"/>
        <dbReference type="ChEBI" id="CHEBI:57566"/>
        <dbReference type="ChEBI" id="CHEBI:58593"/>
        <dbReference type="ChEBI" id="CHEBI:456216"/>
        <dbReference type="EC" id="2.7.4.25"/>
    </reaction>
</comment>
<comment type="subcellular location">
    <subcellularLocation>
        <location evidence="1">Cytoplasm</location>
    </subcellularLocation>
</comment>
<comment type="similarity">
    <text evidence="1">Belongs to the cytidylate kinase family. Type 1 subfamily.</text>
</comment>
<accession>C3P584</accession>
<sequence length="225" mass="25285">MDKRISIAIDGPAAAGKSTVAKVVAKKLSYVYIDTGAMYRTITYAALEQKVDIENEEQLMEVVKNVKIEFQQGENTQLVFLNGQDVSEVIRTPEVTNRVSIVAKHRLVREEMVRRQQELAEKGGVVMDGRDIGTHVLPDAEVKIFMLASVEERAERRHLENMNKGFDSNLEQLKEEIAQRDKLDSEREVSPLKKADDALELDTTSLSIEEVVQKIMGIVLGVFAK</sequence>
<reference key="1">
    <citation type="submission" date="2009-04" db="EMBL/GenBank/DDBJ databases">
        <title>Genome sequence of Bacillus anthracis A0248.</title>
        <authorList>
            <person name="Dodson R.J."/>
            <person name="Munk A.C."/>
            <person name="Bruce D."/>
            <person name="Detter C."/>
            <person name="Tapia R."/>
            <person name="Sutton G."/>
            <person name="Sims D."/>
            <person name="Brettin T."/>
        </authorList>
    </citation>
    <scope>NUCLEOTIDE SEQUENCE [LARGE SCALE GENOMIC DNA]</scope>
    <source>
        <strain>A0248</strain>
    </source>
</reference>
<gene>
    <name evidence="1" type="primary">cmk</name>
    <name type="ordered locus">BAA_1587</name>
</gene>
<dbReference type="EC" id="2.7.4.25" evidence="1"/>
<dbReference type="EMBL" id="CP001598">
    <property type="protein sequence ID" value="ACQ46844.1"/>
    <property type="molecule type" value="Genomic_DNA"/>
</dbReference>
<dbReference type="RefSeq" id="WP_000361263.1">
    <property type="nucleotide sequence ID" value="NC_012659.1"/>
</dbReference>
<dbReference type="SMR" id="C3P584"/>
<dbReference type="GeneID" id="45021493"/>
<dbReference type="KEGG" id="bai:BAA_1587"/>
<dbReference type="HOGENOM" id="CLU_079959_0_2_9"/>
<dbReference type="GO" id="GO:0005829">
    <property type="term" value="C:cytosol"/>
    <property type="evidence" value="ECO:0007669"/>
    <property type="project" value="TreeGrafter"/>
</dbReference>
<dbReference type="GO" id="GO:0005524">
    <property type="term" value="F:ATP binding"/>
    <property type="evidence" value="ECO:0007669"/>
    <property type="project" value="UniProtKB-UniRule"/>
</dbReference>
<dbReference type="GO" id="GO:0036430">
    <property type="term" value="F:CMP kinase activity"/>
    <property type="evidence" value="ECO:0007669"/>
    <property type="project" value="RHEA"/>
</dbReference>
<dbReference type="GO" id="GO:0036431">
    <property type="term" value="F:dCMP kinase activity"/>
    <property type="evidence" value="ECO:0007669"/>
    <property type="project" value="RHEA"/>
</dbReference>
<dbReference type="GO" id="GO:0015949">
    <property type="term" value="P:nucleobase-containing small molecule interconversion"/>
    <property type="evidence" value="ECO:0007669"/>
    <property type="project" value="TreeGrafter"/>
</dbReference>
<dbReference type="GO" id="GO:0006220">
    <property type="term" value="P:pyrimidine nucleotide metabolic process"/>
    <property type="evidence" value="ECO:0007669"/>
    <property type="project" value="UniProtKB-UniRule"/>
</dbReference>
<dbReference type="CDD" id="cd02020">
    <property type="entry name" value="CMPK"/>
    <property type="match status" value="1"/>
</dbReference>
<dbReference type="FunFam" id="3.40.50.300:FF:000484">
    <property type="entry name" value="Cytidylate kinase"/>
    <property type="match status" value="1"/>
</dbReference>
<dbReference type="Gene3D" id="3.40.50.300">
    <property type="entry name" value="P-loop containing nucleotide triphosphate hydrolases"/>
    <property type="match status" value="1"/>
</dbReference>
<dbReference type="HAMAP" id="MF_00238">
    <property type="entry name" value="Cytidyl_kinase_type1"/>
    <property type="match status" value="1"/>
</dbReference>
<dbReference type="InterPro" id="IPR003136">
    <property type="entry name" value="Cytidylate_kin"/>
</dbReference>
<dbReference type="InterPro" id="IPR011994">
    <property type="entry name" value="Cytidylate_kinase_dom"/>
</dbReference>
<dbReference type="InterPro" id="IPR027417">
    <property type="entry name" value="P-loop_NTPase"/>
</dbReference>
<dbReference type="NCBIfam" id="TIGR00017">
    <property type="entry name" value="cmk"/>
    <property type="match status" value="1"/>
</dbReference>
<dbReference type="PANTHER" id="PTHR21299:SF2">
    <property type="entry name" value="CYTIDYLATE KINASE"/>
    <property type="match status" value="1"/>
</dbReference>
<dbReference type="PANTHER" id="PTHR21299">
    <property type="entry name" value="CYTIDYLATE KINASE/PANTOATE-BETA-ALANINE LIGASE"/>
    <property type="match status" value="1"/>
</dbReference>
<dbReference type="Pfam" id="PF02224">
    <property type="entry name" value="Cytidylate_kin"/>
    <property type="match status" value="1"/>
</dbReference>
<dbReference type="SUPFAM" id="SSF52540">
    <property type="entry name" value="P-loop containing nucleoside triphosphate hydrolases"/>
    <property type="match status" value="1"/>
</dbReference>
<name>KCY_BACAA</name>
<organism>
    <name type="scientific">Bacillus anthracis (strain A0248)</name>
    <dbReference type="NCBI Taxonomy" id="592021"/>
    <lineage>
        <taxon>Bacteria</taxon>
        <taxon>Bacillati</taxon>
        <taxon>Bacillota</taxon>
        <taxon>Bacilli</taxon>
        <taxon>Bacillales</taxon>
        <taxon>Bacillaceae</taxon>
        <taxon>Bacillus</taxon>
        <taxon>Bacillus cereus group</taxon>
    </lineage>
</organism>
<evidence type="ECO:0000255" key="1">
    <source>
        <dbReference type="HAMAP-Rule" id="MF_00238"/>
    </source>
</evidence>
<feature type="chain" id="PRO_1000125270" description="Cytidylate kinase">
    <location>
        <begin position="1"/>
        <end position="225"/>
    </location>
</feature>
<feature type="binding site" evidence="1">
    <location>
        <begin position="11"/>
        <end position="19"/>
    </location>
    <ligand>
        <name>ATP</name>
        <dbReference type="ChEBI" id="CHEBI:30616"/>
    </ligand>
</feature>
<proteinExistence type="inferred from homology"/>
<keyword id="KW-0067">ATP-binding</keyword>
<keyword id="KW-0963">Cytoplasm</keyword>
<keyword id="KW-0418">Kinase</keyword>
<keyword id="KW-0547">Nucleotide-binding</keyword>
<keyword id="KW-0808">Transferase</keyword>